<organism>
    <name type="scientific">Escherichia coli (strain SE11)</name>
    <dbReference type="NCBI Taxonomy" id="409438"/>
    <lineage>
        <taxon>Bacteria</taxon>
        <taxon>Pseudomonadati</taxon>
        <taxon>Pseudomonadota</taxon>
        <taxon>Gammaproteobacteria</taxon>
        <taxon>Enterobacterales</taxon>
        <taxon>Enterobacteriaceae</taxon>
        <taxon>Escherichia</taxon>
    </lineage>
</organism>
<accession>B6I4H7</accession>
<feature type="chain" id="PRO_1000123908" description="Probable protein kinase UbiB">
    <location>
        <begin position="1"/>
        <end position="546"/>
    </location>
</feature>
<feature type="transmembrane region" description="Helical" evidence="1">
    <location>
        <begin position="501"/>
        <end position="521"/>
    </location>
</feature>
<feature type="transmembrane region" description="Helical" evidence="1">
    <location>
        <begin position="522"/>
        <end position="542"/>
    </location>
</feature>
<feature type="domain" description="Protein kinase" evidence="1">
    <location>
        <begin position="124"/>
        <end position="502"/>
    </location>
</feature>
<feature type="active site" description="Proton acceptor" evidence="1">
    <location>
        <position position="288"/>
    </location>
</feature>
<feature type="binding site" evidence="1">
    <location>
        <begin position="130"/>
        <end position="138"/>
    </location>
    <ligand>
        <name>ATP</name>
        <dbReference type="ChEBI" id="CHEBI:30616"/>
    </ligand>
</feature>
<feature type="binding site" evidence="1">
    <location>
        <position position="153"/>
    </location>
    <ligand>
        <name>ATP</name>
        <dbReference type="ChEBI" id="CHEBI:30616"/>
    </ligand>
</feature>
<sequence length="546" mass="63203">MTPGEVRRLYFIIRTFLSYGLDELIPKMRITLPLRLWRYSLFWMPNRHKDKLLGERLRLALQELGPVWIKFGQMLSTRRDLFPPHIADQLALLQDKVAPFDGKLAKQQIEAAMGGLPVEAWFDDFEIKPLASASIAQVHTARLKSNGKEVVIKVIRPDILPVIKADLKLIYRLARWVPRLLPDGRRLRPTEVVREYEKTLIDELNLLRESANAIQLRRNFEDSPMLYIPEVYPDYCSEGMMVMERIYGIPVSDVAALEKNGTNMKLLAERGVQVFFTQVFRDSFFHADMHPGNIFVSYEHPENPKYIGIDCGIVGSLNKEDKRYLAENFIAFFNRDYRKVAELHVDSGWVPPDTNVEEFEFAIRTVCEPIFEKPLAEISFGHVLLNLFNTARRFNMEVQPQLVLLQKTLLYVEGVGRQLYPQLDLWKTAKPFLESWIKDQVGIPALVRAFKEKAPFWVEKMPELPELVYDSLRQGKYLQHSVDKIARELQSNHVRQGQSRYFLGIGATLVLSGTFLLVSRPEWGLMPGWLMAGGLIAWFVGWRKTR</sequence>
<reference key="1">
    <citation type="journal article" date="2008" name="DNA Res.">
        <title>Complete genome sequence and comparative analysis of the wild-type commensal Escherichia coli strain SE11 isolated from a healthy adult.</title>
        <authorList>
            <person name="Oshima K."/>
            <person name="Toh H."/>
            <person name="Ogura Y."/>
            <person name="Sasamoto H."/>
            <person name="Morita H."/>
            <person name="Park S.-H."/>
            <person name="Ooka T."/>
            <person name="Iyoda S."/>
            <person name="Taylor T.D."/>
            <person name="Hayashi T."/>
            <person name="Itoh K."/>
            <person name="Hattori M."/>
        </authorList>
    </citation>
    <scope>NUCLEOTIDE SEQUENCE [LARGE SCALE GENOMIC DNA]</scope>
    <source>
        <strain>SE11</strain>
    </source>
</reference>
<proteinExistence type="inferred from homology"/>
<dbReference type="EC" id="2.7.-.-" evidence="1"/>
<dbReference type="EMBL" id="AP009240">
    <property type="protein sequence ID" value="BAG79647.1"/>
    <property type="molecule type" value="Genomic_DNA"/>
</dbReference>
<dbReference type="RefSeq" id="WP_000187530.1">
    <property type="nucleotide sequence ID" value="NC_011415.1"/>
</dbReference>
<dbReference type="SMR" id="B6I4H7"/>
<dbReference type="GeneID" id="75204829"/>
<dbReference type="KEGG" id="ecy:ECSE_4123"/>
<dbReference type="HOGENOM" id="CLU_006533_0_0_6"/>
<dbReference type="UniPathway" id="UPA00232"/>
<dbReference type="Proteomes" id="UP000008199">
    <property type="component" value="Chromosome"/>
</dbReference>
<dbReference type="GO" id="GO:0005886">
    <property type="term" value="C:plasma membrane"/>
    <property type="evidence" value="ECO:0007669"/>
    <property type="project" value="UniProtKB-SubCell"/>
</dbReference>
<dbReference type="GO" id="GO:0005524">
    <property type="term" value="F:ATP binding"/>
    <property type="evidence" value="ECO:0007669"/>
    <property type="project" value="UniProtKB-KW"/>
</dbReference>
<dbReference type="GO" id="GO:0004672">
    <property type="term" value="F:protein kinase activity"/>
    <property type="evidence" value="ECO:0007669"/>
    <property type="project" value="UniProtKB-UniRule"/>
</dbReference>
<dbReference type="GO" id="GO:0010795">
    <property type="term" value="P:regulation of ubiquinone biosynthetic process"/>
    <property type="evidence" value="ECO:0007669"/>
    <property type="project" value="UniProtKB-UniRule"/>
</dbReference>
<dbReference type="GO" id="GO:0006744">
    <property type="term" value="P:ubiquinone biosynthetic process"/>
    <property type="evidence" value="ECO:0007669"/>
    <property type="project" value="UniProtKB-UniPathway"/>
</dbReference>
<dbReference type="CDD" id="cd13972">
    <property type="entry name" value="UbiB"/>
    <property type="match status" value="1"/>
</dbReference>
<dbReference type="HAMAP" id="MF_00414">
    <property type="entry name" value="UbiB"/>
    <property type="match status" value="1"/>
</dbReference>
<dbReference type="InterPro" id="IPR004147">
    <property type="entry name" value="ABC1_dom"/>
</dbReference>
<dbReference type="InterPro" id="IPR011009">
    <property type="entry name" value="Kinase-like_dom_sf"/>
</dbReference>
<dbReference type="InterPro" id="IPR010232">
    <property type="entry name" value="UbiB"/>
</dbReference>
<dbReference type="InterPro" id="IPR045308">
    <property type="entry name" value="UbiB_bact"/>
</dbReference>
<dbReference type="InterPro" id="IPR050154">
    <property type="entry name" value="UbiB_kinase"/>
</dbReference>
<dbReference type="NCBIfam" id="NF003404">
    <property type="entry name" value="PRK04750.1"/>
    <property type="match status" value="1"/>
</dbReference>
<dbReference type="NCBIfam" id="TIGR01982">
    <property type="entry name" value="UbiB"/>
    <property type="match status" value="1"/>
</dbReference>
<dbReference type="PANTHER" id="PTHR10566">
    <property type="entry name" value="CHAPERONE-ACTIVITY OF BC1 COMPLEX CABC1 -RELATED"/>
    <property type="match status" value="1"/>
</dbReference>
<dbReference type="PANTHER" id="PTHR10566:SF113">
    <property type="entry name" value="PROTEIN ACTIVITY OF BC1 COMPLEX KINASE 7, CHLOROPLASTIC"/>
    <property type="match status" value="1"/>
</dbReference>
<dbReference type="Pfam" id="PF03109">
    <property type="entry name" value="ABC1"/>
    <property type="match status" value="1"/>
</dbReference>
<dbReference type="SUPFAM" id="SSF56112">
    <property type="entry name" value="Protein kinase-like (PK-like)"/>
    <property type="match status" value="1"/>
</dbReference>
<name>UBIB_ECOSE</name>
<keyword id="KW-0067">ATP-binding</keyword>
<keyword id="KW-0997">Cell inner membrane</keyword>
<keyword id="KW-1003">Cell membrane</keyword>
<keyword id="KW-0418">Kinase</keyword>
<keyword id="KW-0472">Membrane</keyword>
<keyword id="KW-0547">Nucleotide-binding</keyword>
<keyword id="KW-0808">Transferase</keyword>
<keyword id="KW-0812">Transmembrane</keyword>
<keyword id="KW-1133">Transmembrane helix</keyword>
<keyword id="KW-0831">Ubiquinone biosynthesis</keyword>
<evidence type="ECO:0000255" key="1">
    <source>
        <dbReference type="HAMAP-Rule" id="MF_00414"/>
    </source>
</evidence>
<comment type="function">
    <text evidence="1">Is probably a protein kinase regulator of UbiI activity which is involved in aerobic coenzyme Q (ubiquinone) biosynthesis.</text>
</comment>
<comment type="pathway">
    <text>Cofactor biosynthesis; ubiquinone biosynthesis [regulation].</text>
</comment>
<comment type="subcellular location">
    <subcellularLocation>
        <location evidence="1">Cell inner membrane</location>
        <topology evidence="1">Multi-pass membrane protein</topology>
    </subcellularLocation>
</comment>
<comment type="similarity">
    <text evidence="1">Belongs to the ABC1 family. UbiB subfamily.</text>
</comment>
<gene>
    <name evidence="1" type="primary">ubiB</name>
    <name type="ordered locus">ECSE_4123</name>
</gene>
<protein>
    <recommendedName>
        <fullName evidence="1">Probable protein kinase UbiB</fullName>
        <ecNumber evidence="1">2.7.-.-</ecNumber>
    </recommendedName>
    <alternativeName>
        <fullName evidence="1">Ubiquinone biosynthesis protein UbiB</fullName>
    </alternativeName>
</protein>